<keyword id="KW-1015">Disulfide bond</keyword>
<keyword id="KW-0378">Hydrolase</keyword>
<keyword id="KW-0479">Metal-binding</keyword>
<keyword id="KW-0482">Metalloprotease</keyword>
<keyword id="KW-0574">Periplasm</keyword>
<keyword id="KW-0645">Protease</keyword>
<keyword id="KW-0732">Signal</keyword>
<keyword id="KW-0862">Zinc</keyword>
<dbReference type="EC" id="3.4.24.-" evidence="1"/>
<dbReference type="EMBL" id="CP000305">
    <property type="protein sequence ID" value="ABG18523.1"/>
    <property type="molecule type" value="Genomic_DNA"/>
</dbReference>
<dbReference type="EMBL" id="ACNQ01000013">
    <property type="protein sequence ID" value="EEO76261.1"/>
    <property type="molecule type" value="Genomic_DNA"/>
</dbReference>
<dbReference type="RefSeq" id="WP_002225365.1">
    <property type="nucleotide sequence ID" value="NZ_ACNQ01000013.1"/>
</dbReference>
<dbReference type="SMR" id="Q1CHK7"/>
<dbReference type="MEROPS" id="M74.001"/>
<dbReference type="GeneID" id="49785366"/>
<dbReference type="KEGG" id="ypn:YPN_2194"/>
<dbReference type="HOGENOM" id="CLU_052496_0_0_6"/>
<dbReference type="Proteomes" id="UP000008936">
    <property type="component" value="Chromosome"/>
</dbReference>
<dbReference type="GO" id="GO:0030288">
    <property type="term" value="C:outer membrane-bounded periplasmic space"/>
    <property type="evidence" value="ECO:0007669"/>
    <property type="project" value="InterPro"/>
</dbReference>
<dbReference type="GO" id="GO:0046872">
    <property type="term" value="F:metal ion binding"/>
    <property type="evidence" value="ECO:0007669"/>
    <property type="project" value="UniProtKB-KW"/>
</dbReference>
<dbReference type="GO" id="GO:0004222">
    <property type="term" value="F:metalloendopeptidase activity"/>
    <property type="evidence" value="ECO:0007669"/>
    <property type="project" value="UniProtKB-UniRule"/>
</dbReference>
<dbReference type="GO" id="GO:0004252">
    <property type="term" value="F:serine-type endopeptidase activity"/>
    <property type="evidence" value="ECO:0007669"/>
    <property type="project" value="InterPro"/>
</dbReference>
<dbReference type="GO" id="GO:0000270">
    <property type="term" value="P:peptidoglycan metabolic process"/>
    <property type="evidence" value="ECO:0007669"/>
    <property type="project" value="UniProtKB-UniRule"/>
</dbReference>
<dbReference type="GO" id="GO:0006508">
    <property type="term" value="P:proteolysis"/>
    <property type="evidence" value="ECO:0007669"/>
    <property type="project" value="UniProtKB-KW"/>
</dbReference>
<dbReference type="Gene3D" id="3.30.1380.10">
    <property type="match status" value="1"/>
</dbReference>
<dbReference type="HAMAP" id="MF_01623">
    <property type="entry name" value="MepA"/>
    <property type="match status" value="1"/>
</dbReference>
<dbReference type="InterPro" id="IPR009045">
    <property type="entry name" value="Hedgehog_sig/DD-Pept_Zn-bd_sf"/>
</dbReference>
<dbReference type="InterPro" id="IPR005073">
    <property type="entry name" value="Peptidase_M74"/>
</dbReference>
<dbReference type="NCBIfam" id="NF006947">
    <property type="entry name" value="PRK09429.1"/>
    <property type="match status" value="1"/>
</dbReference>
<dbReference type="Pfam" id="PF03411">
    <property type="entry name" value="Peptidase_M74"/>
    <property type="match status" value="1"/>
</dbReference>
<dbReference type="PIRSF" id="PIRSF018455">
    <property type="entry name" value="MepA"/>
    <property type="match status" value="1"/>
</dbReference>
<dbReference type="SUPFAM" id="SSF55166">
    <property type="entry name" value="Hedgehog/DD-peptidase"/>
    <property type="match status" value="1"/>
</dbReference>
<sequence length="275" mass="30293">MKNWIVGMVALVTMVPVMAATPWQKITHPVAGSPQSIGGFANGCVIGAQPLPLESADYQVMRSDQRRYFGHPDLLNFIHRLSAQAHQQQLGTVLIGDMAMPAGGRFSSGHASHQSGLDVDIWLQLPKQRWSQQQLLKPQPIDLVAVDGKRVIPALWQPQIESLIKLAAKDNDVTRIFVNPAIKKQLCLDAGADRQWLHKVRPWFAHRAHMHVRLRCPANSLECVDQDTPPPGDGCGAELESWFQPPPPSAKPGKTLPPPLPPSCQALLDNHFATE</sequence>
<evidence type="ECO:0000255" key="1">
    <source>
        <dbReference type="HAMAP-Rule" id="MF_01623"/>
    </source>
</evidence>
<evidence type="ECO:0000256" key="2">
    <source>
        <dbReference type="SAM" id="MobiDB-lite"/>
    </source>
</evidence>
<protein>
    <recommendedName>
        <fullName evidence="1">Penicillin-insensitive murein endopeptidase</fullName>
        <ecNumber evidence="1">3.4.24.-</ecNumber>
    </recommendedName>
    <alternativeName>
        <fullName evidence="1">D-alanyl-D-alanine-endopeptidase</fullName>
        <shortName evidence="1">DD-endopeptidase</shortName>
    </alternativeName>
</protein>
<reference key="1">
    <citation type="journal article" date="2006" name="J. Bacteriol.">
        <title>Complete genome sequence of Yersinia pestis strains Antiqua and Nepal516: evidence of gene reduction in an emerging pathogen.</title>
        <authorList>
            <person name="Chain P.S.G."/>
            <person name="Hu P."/>
            <person name="Malfatti S.A."/>
            <person name="Radnedge L."/>
            <person name="Larimer F."/>
            <person name="Vergez L.M."/>
            <person name="Worsham P."/>
            <person name="Chu M.C."/>
            <person name="Andersen G.L."/>
        </authorList>
    </citation>
    <scope>NUCLEOTIDE SEQUENCE [LARGE SCALE GENOMIC DNA]</scope>
    <source>
        <strain>Nepal516</strain>
    </source>
</reference>
<reference key="2">
    <citation type="submission" date="2009-04" db="EMBL/GenBank/DDBJ databases">
        <title>Yersinia pestis Nepal516A whole genome shotgun sequencing project.</title>
        <authorList>
            <person name="Plunkett G. III"/>
            <person name="Anderson B.D."/>
            <person name="Baumler D.J."/>
            <person name="Burland V."/>
            <person name="Cabot E.L."/>
            <person name="Glasner J.D."/>
            <person name="Mau B."/>
            <person name="Neeno-Eckwall E."/>
            <person name="Perna N.T."/>
            <person name="Munk A.C."/>
            <person name="Tapia R."/>
            <person name="Green L.D."/>
            <person name="Rogers Y.C."/>
            <person name="Detter J.C."/>
            <person name="Bruce D.C."/>
            <person name="Brettin T.S."/>
        </authorList>
    </citation>
    <scope>NUCLEOTIDE SEQUENCE [LARGE SCALE GENOMIC DNA]</scope>
    <source>
        <strain>Nepal516</strain>
    </source>
</reference>
<comment type="function">
    <text evidence="1">Murein endopeptidase that cleaves the D-alanyl-meso-2,6-diamino-pimelyl amide bond that connects peptidoglycan strands. Likely plays a role in the removal of murein from the sacculus.</text>
</comment>
<comment type="cofactor">
    <cofactor evidence="1">
        <name>Zn(2+)</name>
        <dbReference type="ChEBI" id="CHEBI:29105"/>
    </cofactor>
    <text evidence="1">Binds 2 Zn(2+) ions per subunit. Zn(2+) ion 1 is bound in the active site. Zn(2+) ion 2 is bound at the dimer interface by residues from both subunits.</text>
</comment>
<comment type="subunit">
    <text evidence="1">Dimer.</text>
</comment>
<comment type="subcellular location">
    <subcellularLocation>
        <location evidence="1">Periplasm</location>
    </subcellularLocation>
</comment>
<comment type="similarity">
    <text evidence="1">Belongs to the peptidase M74 family.</text>
</comment>
<feature type="signal peptide" evidence="1">
    <location>
        <begin position="1"/>
        <end position="19"/>
    </location>
</feature>
<feature type="chain" id="PRO_0000292560" description="Penicillin-insensitive murein endopeptidase">
    <location>
        <begin position="20"/>
        <end position="275"/>
    </location>
</feature>
<feature type="region of interest" description="Disordered" evidence="2">
    <location>
        <begin position="227"/>
        <end position="262"/>
    </location>
</feature>
<feature type="compositionally biased region" description="Pro residues" evidence="2">
    <location>
        <begin position="244"/>
        <end position="262"/>
    </location>
</feature>
<feature type="binding site" evidence="1">
    <location>
        <position position="110"/>
    </location>
    <ligand>
        <name>Zn(2+)</name>
        <dbReference type="ChEBI" id="CHEBI:29105"/>
        <label>1</label>
    </ligand>
</feature>
<feature type="binding site" evidence="1">
    <location>
        <position position="113"/>
    </location>
    <ligand>
        <name>Zn(2+)</name>
        <dbReference type="ChEBI" id="CHEBI:29105"/>
        <label>1</label>
    </ligand>
</feature>
<feature type="binding site" evidence="1">
    <location>
        <position position="120"/>
    </location>
    <ligand>
        <name>Zn(2+)</name>
        <dbReference type="ChEBI" id="CHEBI:29105"/>
        <label>1</label>
    </ligand>
</feature>
<feature type="binding site" evidence="1">
    <location>
        <position position="147"/>
    </location>
    <ligand>
        <name>Zn(2+)</name>
        <dbReference type="ChEBI" id="CHEBI:29105"/>
        <label>2</label>
    </ligand>
</feature>
<feature type="binding site" evidence="1">
    <location>
        <position position="211"/>
    </location>
    <ligand>
        <name>Zn(2+)</name>
        <dbReference type="ChEBI" id="CHEBI:29105"/>
        <label>1</label>
    </ligand>
</feature>
<feature type="disulfide bond" evidence="1">
    <location>
        <begin position="44"/>
        <end position="264"/>
    </location>
</feature>
<feature type="disulfide bond" evidence="1">
    <location>
        <begin position="187"/>
        <end position="235"/>
    </location>
</feature>
<feature type="disulfide bond" evidence="1">
    <location>
        <begin position="216"/>
        <end position="223"/>
    </location>
</feature>
<proteinExistence type="inferred from homology"/>
<accession>Q1CHK7</accession>
<accession>C4GU74</accession>
<organism>
    <name type="scientific">Yersinia pestis bv. Antiqua (strain Nepal516)</name>
    <dbReference type="NCBI Taxonomy" id="377628"/>
    <lineage>
        <taxon>Bacteria</taxon>
        <taxon>Pseudomonadati</taxon>
        <taxon>Pseudomonadota</taxon>
        <taxon>Gammaproteobacteria</taxon>
        <taxon>Enterobacterales</taxon>
        <taxon>Yersiniaceae</taxon>
        <taxon>Yersinia</taxon>
    </lineage>
</organism>
<gene>
    <name evidence="1" type="primary">mepA</name>
    <name type="ordered locus">YPN_2194</name>
    <name type="ORF">YP516_2458</name>
</gene>
<name>MEPA_YERPN</name>